<reference key="1">
    <citation type="journal article" date="1993" name="J. Biol. Chem.">
        <title>Cloning, sequencing, and expression of a cDNA encoding rat liver carnitine palmitoyltransferase I. Direct evidence that a single polypeptide is involved in inhibitor interaction and catalytic function.</title>
        <authorList>
            <person name="Esser V."/>
            <person name="Britton C.H."/>
            <person name="Weis B.C."/>
            <person name="Foster D.W."/>
            <person name="McGarry J.D."/>
        </authorList>
    </citation>
    <scope>NUCLEOTIDE SEQUENCE [MRNA]</scope>
    <source>
        <tissue>Liver</tissue>
    </source>
</reference>
<reference key="2">
    <citation type="journal article" date="1997" name="Biochemistry">
        <title>Functional characterization of mitochondrial carnitine palmitoyltransferases I and II expressed in the yeast Pichia pastoris.</title>
        <authorList>
            <person name="de Vries Y."/>
            <person name="Arvidson D.N."/>
            <person name="Waterham H.R."/>
            <person name="Cregg J.M."/>
            <person name="Woldegiorgis G."/>
        </authorList>
    </citation>
    <scope>NUCLEOTIDE SEQUENCE [MRNA]</scope>
    <source>
        <strain>Sprague-Dawley</strain>
        <tissue>Liver</tissue>
    </source>
</reference>
<reference key="3">
    <citation type="journal article" date="2004" name="Genome Res.">
        <title>The status, quality, and expansion of the NIH full-length cDNA project: the Mammalian Gene Collection (MGC).</title>
        <authorList>
            <consortium name="The MGC Project Team"/>
        </authorList>
    </citation>
    <scope>NUCLEOTIDE SEQUENCE [LARGE SCALE MRNA]</scope>
    <source>
        <tissue>Heart</tissue>
    </source>
</reference>
<reference key="4">
    <citation type="journal article" date="2007" name="Biochim. Biophys. Acta">
        <title>Post-translational modifications of rat liver mitochondrial outer membrane proteins identified by mass spectrometry.</title>
        <authorList>
            <person name="Distler A.M."/>
            <person name="Kerner J."/>
            <person name="Hoppel C.L."/>
        </authorList>
    </citation>
    <scope>PROTEIN SEQUENCE OF 2-22; 272-283; 585-595 AND 599-606</scope>
    <scope>ACETYLATION AT ALA-2</scope>
    <scope>NITRATION AT TYR-282 AND TYR-589</scope>
    <scope>PHOSPHORYLATION AT THR-588; THR-604; SER-741 AND SER-747</scope>
    <scope>IDENTIFICATION BY MASS SPECTROMETRY</scope>
    <source>
        <tissue>Liver</tissue>
    </source>
</reference>
<reference key="5">
    <citation type="journal article" date="1993" name="FEBS Lett.">
        <title>Mature carnitine palmitoyltransferase I retains the N-terminus of the nascent protein in rat liver.</title>
        <authorList>
            <person name="Kolodziej M.P."/>
            <person name="Zammit V.A."/>
        </authorList>
    </citation>
    <scope>PROTEIN SEQUENCE OF 4-21; 259-276; 361-379; 529-543 AND 696-717</scope>
    <source>
        <tissue>Liver</tissue>
    </source>
</reference>
<reference key="6">
    <citation type="journal article" date="1993" name="J. Biol. Chem.">
        <title>Inhibitors of mitochondrial carnitine palmitoyltransferase I limit the action of proteases on the enzyme. Isolation and partial amino acid analysis of a truncated form of the rat liver isozyme.</title>
        <authorList>
            <person name="Esser V."/>
            <person name="Kuwajima M."/>
            <person name="Britton C.H."/>
            <person name="Krishnan K."/>
            <person name="Foster D.W."/>
            <person name="McGarry J.D."/>
        </authorList>
    </citation>
    <scope>PARTIAL PROTEIN SEQUENCE</scope>
</reference>
<reference key="7">
    <citation type="journal article" date="1996" name="J. Biol. Chem.">
        <title>Expression of a cDNA isolated from rat brown adipose tissue and heart identifies the product as the muscle isoform of carnitine palmitoyltransferase I (M-CPT I). M-CPT I is the predominant CPT I isoform expressed in both white (epididymal) and brown adipocytes.</title>
        <authorList>
            <person name="Esser V."/>
            <person name="Brown N.F."/>
            <person name="Cowan A.T."/>
            <person name="Foster D.W."/>
            <person name="McGarry J.D."/>
        </authorList>
    </citation>
    <scope>TISSUE SPECIFICITY</scope>
    <source>
        <strain>Sprague-Dawley</strain>
        <tissue>Heart</tissue>
    </source>
</reference>
<reference key="8">
    <citation type="journal article" date="1997" name="Biochem. J.">
        <title>Topology of carnitine palmitoyltransferase I in the mitochondrial outer membrane.</title>
        <authorList>
            <person name="Fraser F."/>
            <person name="Corstorphine C.G."/>
            <person name="Zammit V.A."/>
        </authorList>
    </citation>
    <scope>TOPOLOGY</scope>
</reference>
<reference key="9">
    <citation type="journal article" date="2001" name="J. Biol. Chem.">
        <title>Structural model of the catalytic core of carnitine palmitoyltransferase I and carnitine octanoyltransferase (COT): mutation of CPT I histidine 473 and alanine 381 and COT alanine 238 impairs the catalytic activity.</title>
        <authorList>
            <person name="Morillas M."/>
            <person name="Gomez-Puertas P."/>
            <person name="Roca R."/>
            <person name="Serra D."/>
            <person name="Asins G."/>
            <person name="Valencia A."/>
            <person name="Hegardt F.G."/>
        </authorList>
    </citation>
    <scope>MUTAGENESIS OF ALA-381 AND HIS-473</scope>
    <scope>3D-STRUCTURE MODELING</scope>
</reference>
<reference key="10">
    <citation type="journal article" date="2003" name="J. Biol. Chem.">
        <title>Identification of conserved amino acid residues in rat liver carnitine palmitoyltransferase I critical for malonyl-CoA inhibition. Mutation of methionine 593 abolishes malonyl-CoA inhibition.</title>
        <authorList>
            <person name="Morillas M."/>
            <person name="Gomez-Puertas P."/>
            <person name="Bentebibel A."/>
            <person name="Selles E."/>
            <person name="Casals N."/>
            <person name="Valencia A."/>
            <person name="Hegardt F.G."/>
            <person name="Asins G."/>
            <person name="Serra D."/>
        </authorList>
    </citation>
    <scope>MUTAGENESIS OF MET-593 AND CYS-608</scope>
</reference>
<reference key="11">
    <citation type="journal article" date="2004" name="Biochem. J.">
        <title>Structural model of carnitine palmitoyltransferase I based on the carnitine acetyltransferase crystal.</title>
        <authorList>
            <person name="Morillas M."/>
            <person name="Lopez-Vinas E."/>
            <person name="Valencia A."/>
            <person name="Serra D."/>
            <person name="Gomez-Puertas P."/>
            <person name="Hegardt F.G."/>
            <person name="Asins G."/>
        </authorList>
    </citation>
    <scope>MUTAGENESIS OF ASP-477; LYS-560; GLU-590; SER-685; THR-686 AND SER-687</scope>
    <scope>3D-STRUCTURE MODELING</scope>
</reference>
<reference key="12">
    <citation type="journal article" date="2006" name="J. Biol. Chem.">
        <title>The mitochondrial intermembrane loop region of rat carnitine palmitoyltransferase 1A is a major determinant of its malonyl-CoA sensitivity.</title>
        <authorList>
            <person name="Borthwick K."/>
            <person name="Jackson V.N."/>
            <person name="Price N.T."/>
            <person name="Zammit V.A."/>
        </authorList>
    </citation>
    <scope>FUNCTION</scope>
    <scope>SUBCELLULAR LOCATION</scope>
    <scope>CATALYTIC ACTIVITY</scope>
    <scope>ACTIVITY REGULATION</scope>
    <scope>BIOPHYSICOCHEMICAL PROPERTIES</scope>
</reference>
<reference key="13">
    <citation type="journal article" date="2008" name="J. Biol. Chem.">
        <title>CPT1c is localized in endoplasmic reticulum of neurons and has carnitine palmitoyltransferase activity.</title>
        <authorList>
            <person name="Sierra A.Y."/>
            <person name="Gratacos E."/>
            <person name="Carrasco P."/>
            <person name="Clotet J."/>
            <person name="Urena J."/>
            <person name="Serra D."/>
            <person name="Asins G."/>
            <person name="Hegardt F.G."/>
            <person name="Casals N."/>
        </authorList>
    </citation>
    <scope>FUNCTION</scope>
    <scope>CATALYTIC ACTIVITY</scope>
    <scope>SUBCELLULAR LOCATION</scope>
    <scope>BIOPHYSICOCHEMICAL PROPERTIES</scope>
</reference>
<reference key="14">
    <citation type="journal article" date="2008" name="Am. J. Physiol.">
        <title>A moderate increase in carnitine palmitoyltransferase 1a activity is sufficient to substantially reduce hepatic triglyceride levels.</title>
        <authorList>
            <person name="Stefanovic-Racic M."/>
            <person name="Perdomo G."/>
            <person name="Mantell B.S."/>
            <person name="Sipula I.J."/>
            <person name="Brown N.F."/>
            <person name="O'Doherty R.M."/>
        </authorList>
    </citation>
    <scope>FUNCTION</scope>
    <scope>CATALYTIC ACTIVITY</scope>
</reference>
<reference key="15">
    <citation type="journal article" date="2009" name="J. Biol. Chem.">
        <title>Self-association of transmembrane domain 2 (TM2), but not TM1, in carnitine palmitoyltransferase 1A: role of GXXXG(A) motifs.</title>
        <authorList>
            <person name="Jenei Z.A."/>
            <person name="Borthwick K."/>
            <person name="Zammit V.A."/>
            <person name="Dixon A.M."/>
        </authorList>
    </citation>
    <scope>SUBUNIT</scope>
    <scope>SUBCELLULAR LOCATION</scope>
</reference>
<reference key="16">
    <citation type="journal article" date="2011" name="J. Biol. Chem.">
        <title>Mitochondrial carnitine palmitoyltransferase 1a (CPT1a) is part of an outer membrane fatty acid transfer complex.</title>
        <authorList>
            <person name="Lee K."/>
            <person name="Kerner J."/>
            <person name="Hoppel C.L."/>
        </authorList>
    </citation>
    <scope>SUBCELLULAR LOCATION</scope>
    <scope>IDENTIFICATION IN A COMPLEX WITH ACSL1 AND VDAC1; IDENTIFICATION IN COMPLEXES WITH ACSL1; VDAC2 AND VDAC3</scope>
    <scope>IDENTIFICATION BY MASS SPECTROMETRY</scope>
</reference>
<reference key="17">
    <citation type="journal article" date="2011" name="J. Biol. Chem.">
        <title>An environment-dependent structural switch underlies the regulation of carnitine palmitoyltransferase 1A.</title>
        <authorList>
            <person name="Rao J.N."/>
            <person name="Warren G.Z."/>
            <person name="Estolt-Povedano S."/>
            <person name="Zammit V.A."/>
            <person name="Ulmer T.S."/>
        </authorList>
    </citation>
    <scope>FUNCTION</scope>
    <scope>CATALYTIC ACTIVITY</scope>
    <scope>ACTIVITY REGULATION</scope>
    <scope>DOMAIN</scope>
    <scope>MUTAGENESIS OF GLU-3; ALA-9 AND GLY-18</scope>
</reference>
<reference key="18">
    <citation type="journal article" date="2014" name="Appl. Biochem. Biotechnol.">
        <title>Comparison of the catalytic activities of three isozymes of carnitine palmitoyltransferase 1 expressed in COS7 cells.</title>
        <authorList>
            <person name="Hada T."/>
            <person name="Yamamoto T."/>
            <person name="Yamamoto A."/>
            <person name="Ohkura K."/>
            <person name="Yamazaki N."/>
            <person name="Takiguchi Y."/>
            <person name="Shinohara Y."/>
        </authorList>
    </citation>
    <scope>FUNCTION</scope>
    <scope>CATALYTIC ACTIVITY</scope>
</reference>
<name>CPT1A_RAT</name>
<sequence>MAEAHQAVAFQFTVTPDGIDLRLSHEALKQICLSGLHSWKKKFIRFKNGIITGVFPANPSSWLIVVVGVISSMHAKVDPSLGMIAKISRTLDTTGRMSSQTKNIVSGVLFGTGLWVAVIMTMRYSLKVLLSYHGWMFAEHGKMSRSTKIWMAMVKVLSGRKPMLYSFQTSLPRLPVPAVKDTVSRYLESVRPLMKEEDFQRMTALAQDFAVNLGPKLQWYLKLKSWWATNYVSDWWEEYIYLRGRGPLMVNSNYYAMEMLYITPTHIQAARAGNTIHAILLYRRTLDREELKPIRLLGSTIPLCSAQWERLFNTSRIPGEETDTIQHIKDSRHIVVYHRGRYFKVWLYHDGRLLRPRELEQQMQQILDDPSEPQPGEAKLAALTAADRVPWAKCRQTYFARGKNKQSLDAVEKAAFFVTLDESEQGYREEDPEASIDSYAKSLLHGRCFDRWFDKSITFVVFKNSKIGINAEHSWADAPVVGHLWEYVMATDVFQLGYSEDGHCKGDTNPNIPKPTRLQWDIPGECQEVIDASLSSASLLANDVDLHSFPFDSFGKGLIKKCRTSPDAFIQLALQLAHYKDMGKFCLTYEASMTRLFREGRTETVRSCTMESCNFVQAMMDPKSTAEQRLKLFKIACEKHQHLYRLAMTGAGIDRHLFCLYVVSKYLAVDSPFLKEVLSEPWRLSTSQTPQQQVELFDFEKNPDYVSCGGGFGPVADDGYGVSYIIVGENFIHFHISSKFSSPETDSHRFGKHLRQAMMDIITLFGLTINSKK</sequence>
<organism>
    <name type="scientific">Rattus norvegicus</name>
    <name type="common">Rat</name>
    <dbReference type="NCBI Taxonomy" id="10116"/>
    <lineage>
        <taxon>Eukaryota</taxon>
        <taxon>Metazoa</taxon>
        <taxon>Chordata</taxon>
        <taxon>Craniata</taxon>
        <taxon>Vertebrata</taxon>
        <taxon>Euteleostomi</taxon>
        <taxon>Mammalia</taxon>
        <taxon>Eutheria</taxon>
        <taxon>Euarchontoglires</taxon>
        <taxon>Glires</taxon>
        <taxon>Rodentia</taxon>
        <taxon>Myomorpha</taxon>
        <taxon>Muroidea</taxon>
        <taxon>Muridae</taxon>
        <taxon>Murinae</taxon>
        <taxon>Rattus</taxon>
    </lineage>
</organism>
<evidence type="ECO:0000250" key="1">
    <source>
        <dbReference type="UniProtKB" id="P18886"/>
    </source>
</evidence>
<evidence type="ECO:0000250" key="2">
    <source>
        <dbReference type="UniProtKB" id="P50416"/>
    </source>
</evidence>
<evidence type="ECO:0000255" key="3"/>
<evidence type="ECO:0000269" key="4">
    <source>
    </source>
</evidence>
<evidence type="ECO:0000269" key="5">
    <source>
    </source>
</evidence>
<evidence type="ECO:0000269" key="6">
    <source>
    </source>
</evidence>
<evidence type="ECO:0000269" key="7">
    <source>
    </source>
</evidence>
<evidence type="ECO:0000269" key="8">
    <source>
    </source>
</evidence>
<evidence type="ECO:0000269" key="9">
    <source>
    </source>
</evidence>
<evidence type="ECO:0000269" key="10">
    <source>
    </source>
</evidence>
<evidence type="ECO:0000269" key="11">
    <source>
    </source>
</evidence>
<evidence type="ECO:0000269" key="12">
    <source>
    </source>
</evidence>
<evidence type="ECO:0000269" key="13">
    <source>
    </source>
</evidence>
<evidence type="ECO:0000269" key="14">
    <source>
    </source>
</evidence>
<evidence type="ECO:0000269" key="15">
    <source>
    </source>
</evidence>
<evidence type="ECO:0000305" key="16"/>
<evidence type="ECO:0000305" key="17">
    <source>
    </source>
</evidence>
<dbReference type="EC" id="2.3.1.21" evidence="7 10 13"/>
<dbReference type="EC" id="2.3.1.-" evidence="2"/>
<dbReference type="EMBL" id="L07736">
    <property type="protein sequence ID" value="AAA40876.1"/>
    <property type="molecule type" value="mRNA"/>
</dbReference>
<dbReference type="EMBL" id="U88294">
    <property type="protein sequence ID" value="AAB48046.1"/>
    <property type="molecule type" value="mRNA"/>
</dbReference>
<dbReference type="EMBL" id="BC072522">
    <property type="protein sequence ID" value="AAH72522.1"/>
    <property type="molecule type" value="mRNA"/>
</dbReference>
<dbReference type="PIR" id="A46627">
    <property type="entry name" value="A46627"/>
</dbReference>
<dbReference type="RefSeq" id="NP_113747.2">
    <property type="nucleotide sequence ID" value="NM_031559.2"/>
</dbReference>
<dbReference type="RefSeq" id="XP_006230757.1">
    <property type="nucleotide sequence ID" value="XM_006230695.2"/>
</dbReference>
<dbReference type="RefSeq" id="XP_017444326.1">
    <property type="nucleotide sequence ID" value="XM_017588837.2"/>
</dbReference>
<dbReference type="RefSeq" id="XP_038958249.1">
    <property type="nucleotide sequence ID" value="XM_039102321.2"/>
</dbReference>
<dbReference type="RefSeq" id="XP_063138421.1">
    <property type="nucleotide sequence ID" value="XM_063282351.1"/>
</dbReference>
<dbReference type="SMR" id="P32198"/>
<dbReference type="CORUM" id="P32198"/>
<dbReference type="FunCoup" id="P32198">
    <property type="interactions" value="1633"/>
</dbReference>
<dbReference type="IntAct" id="P32198">
    <property type="interactions" value="2"/>
</dbReference>
<dbReference type="MINT" id="P32198"/>
<dbReference type="STRING" id="10116.ENSRNOP00000019652"/>
<dbReference type="BindingDB" id="P32198"/>
<dbReference type="ChEMBL" id="CHEMBL3858"/>
<dbReference type="DrugCentral" id="P32198"/>
<dbReference type="GuidetoPHARMACOLOGY" id="3249"/>
<dbReference type="SwissLipids" id="SLP:000000777"/>
<dbReference type="GlyGen" id="P32198">
    <property type="glycosylation" value="1 site, 1 O-linked glycan (1 site)"/>
</dbReference>
<dbReference type="iPTMnet" id="P32198"/>
<dbReference type="PhosphoSitePlus" id="P32198"/>
<dbReference type="SwissPalm" id="P32198"/>
<dbReference type="jPOST" id="P32198"/>
<dbReference type="PaxDb" id="10116-ENSRNOP00000019652"/>
<dbReference type="Ensembl" id="ENSRNOT00000019652.4">
    <property type="protein sequence ID" value="ENSRNOP00000019652.1"/>
    <property type="gene ID" value="ENSRNOG00000014254.4"/>
</dbReference>
<dbReference type="GeneID" id="25757"/>
<dbReference type="KEGG" id="rno:25757"/>
<dbReference type="UCSC" id="RGD:2396">
    <property type="organism name" value="rat"/>
</dbReference>
<dbReference type="AGR" id="RGD:2396"/>
<dbReference type="CTD" id="1374"/>
<dbReference type="RGD" id="2396">
    <property type="gene designation" value="Cpt1a"/>
</dbReference>
<dbReference type="eggNOG" id="KOG3716">
    <property type="taxonomic scope" value="Eukaryota"/>
</dbReference>
<dbReference type="GeneTree" id="ENSGT01130000278324"/>
<dbReference type="HOGENOM" id="CLU_013513_2_1_1"/>
<dbReference type="InParanoid" id="P32198"/>
<dbReference type="OMA" id="KMDGTPT"/>
<dbReference type="OrthoDB" id="18447at9989"/>
<dbReference type="PhylomeDB" id="P32198"/>
<dbReference type="TreeFam" id="TF313836"/>
<dbReference type="BioCyc" id="MetaCyc:MONOMER-14439"/>
<dbReference type="BRENDA" id="2.3.1.21">
    <property type="organism ID" value="5301"/>
</dbReference>
<dbReference type="Reactome" id="R-RNO-200425">
    <property type="pathway name" value="Carnitine shuttle"/>
</dbReference>
<dbReference type="SABIO-RK" id="P32198"/>
<dbReference type="UniPathway" id="UPA00659"/>
<dbReference type="PRO" id="PR:P32198"/>
<dbReference type="Proteomes" id="UP000002494">
    <property type="component" value="Chromosome 1"/>
</dbReference>
<dbReference type="Bgee" id="ENSRNOG00000014254">
    <property type="expression patterns" value="Expressed in liver and 19 other cell types or tissues"/>
</dbReference>
<dbReference type="GO" id="GO:0005741">
    <property type="term" value="C:mitochondrial outer membrane"/>
    <property type="evidence" value="ECO:0000314"/>
    <property type="project" value="UniProtKB"/>
</dbReference>
<dbReference type="GO" id="GO:0005739">
    <property type="term" value="C:mitochondrion"/>
    <property type="evidence" value="ECO:0000266"/>
    <property type="project" value="RGD"/>
</dbReference>
<dbReference type="GO" id="GO:0004095">
    <property type="term" value="F:carnitine O-palmitoyltransferase activity"/>
    <property type="evidence" value="ECO:0000314"/>
    <property type="project" value="UniProtKB"/>
</dbReference>
<dbReference type="GO" id="GO:0042802">
    <property type="term" value="F:identical protein binding"/>
    <property type="evidence" value="ECO:0000353"/>
    <property type="project" value="RGD"/>
</dbReference>
<dbReference type="GO" id="GO:0030674">
    <property type="term" value="F:protein-macromolecule adaptor activity"/>
    <property type="evidence" value="ECO:0000266"/>
    <property type="project" value="RGD"/>
</dbReference>
<dbReference type="GO" id="GO:0046222">
    <property type="term" value="P:aflatoxin metabolic process"/>
    <property type="evidence" value="ECO:0000270"/>
    <property type="project" value="RGD"/>
</dbReference>
<dbReference type="GO" id="GO:0009437">
    <property type="term" value="P:carnitine metabolic process"/>
    <property type="evidence" value="ECO:0000314"/>
    <property type="project" value="UniProtKB"/>
</dbReference>
<dbReference type="GO" id="GO:0071398">
    <property type="term" value="P:cellular response to fatty acid"/>
    <property type="evidence" value="ECO:0000270"/>
    <property type="project" value="RGD"/>
</dbReference>
<dbReference type="GO" id="GO:0042755">
    <property type="term" value="P:eating behavior"/>
    <property type="evidence" value="ECO:0000315"/>
    <property type="project" value="RGD"/>
</dbReference>
<dbReference type="GO" id="GO:0030855">
    <property type="term" value="P:epithelial cell differentiation"/>
    <property type="evidence" value="ECO:0000266"/>
    <property type="project" value="RGD"/>
</dbReference>
<dbReference type="GO" id="GO:0006635">
    <property type="term" value="P:fatty acid beta-oxidation"/>
    <property type="evidence" value="ECO:0000270"/>
    <property type="project" value="RGD"/>
</dbReference>
<dbReference type="GO" id="GO:0006631">
    <property type="term" value="P:fatty acid metabolic process"/>
    <property type="evidence" value="ECO:0000314"/>
    <property type="project" value="UniProtKB"/>
</dbReference>
<dbReference type="GO" id="GO:0006006">
    <property type="term" value="P:glucose metabolic process"/>
    <property type="evidence" value="ECO:0000315"/>
    <property type="project" value="RGD"/>
</dbReference>
<dbReference type="GO" id="GO:0097421">
    <property type="term" value="P:liver regeneration"/>
    <property type="evidence" value="ECO:0000270"/>
    <property type="project" value="RGD"/>
</dbReference>
<dbReference type="GO" id="GO:0001676">
    <property type="term" value="P:long-chain fatty acid metabolic process"/>
    <property type="evidence" value="ECO:0000314"/>
    <property type="project" value="UniProtKB"/>
</dbReference>
<dbReference type="GO" id="GO:0032000">
    <property type="term" value="P:positive regulation of fatty acid beta-oxidation"/>
    <property type="evidence" value="ECO:0000315"/>
    <property type="project" value="RGD"/>
</dbReference>
<dbReference type="GO" id="GO:0045089">
    <property type="term" value="P:positive regulation of innate immune response"/>
    <property type="evidence" value="ECO:0000266"/>
    <property type="project" value="RGD"/>
</dbReference>
<dbReference type="GO" id="GO:0031998">
    <property type="term" value="P:regulation of fatty acid beta-oxidation"/>
    <property type="evidence" value="ECO:0000304"/>
    <property type="project" value="RGD"/>
</dbReference>
<dbReference type="GO" id="GO:0046320">
    <property type="term" value="P:regulation of fatty acid oxidation"/>
    <property type="evidence" value="ECO:0000315"/>
    <property type="project" value="RGD"/>
</dbReference>
<dbReference type="GO" id="GO:0050796">
    <property type="term" value="P:regulation of insulin secretion"/>
    <property type="evidence" value="ECO:0000315"/>
    <property type="project" value="RGD"/>
</dbReference>
<dbReference type="GO" id="GO:0043279">
    <property type="term" value="P:response to alkaloid"/>
    <property type="evidence" value="ECO:0000270"/>
    <property type="project" value="RGD"/>
</dbReference>
<dbReference type="GO" id="GO:0045471">
    <property type="term" value="P:response to ethanol"/>
    <property type="evidence" value="ECO:0000270"/>
    <property type="project" value="RGD"/>
</dbReference>
<dbReference type="GO" id="GO:0001666">
    <property type="term" value="P:response to hypoxia"/>
    <property type="evidence" value="ECO:0000270"/>
    <property type="project" value="RGD"/>
</dbReference>
<dbReference type="GO" id="GO:0007584">
    <property type="term" value="P:response to nutrient"/>
    <property type="evidence" value="ECO:0000270"/>
    <property type="project" value="RGD"/>
</dbReference>
<dbReference type="GO" id="GO:0031667">
    <property type="term" value="P:response to nutrient levels"/>
    <property type="evidence" value="ECO:0000270"/>
    <property type="project" value="RGD"/>
</dbReference>
<dbReference type="GO" id="GO:1904772">
    <property type="term" value="P:response to tetrachloromethane"/>
    <property type="evidence" value="ECO:0000270"/>
    <property type="project" value="RGD"/>
</dbReference>
<dbReference type="GO" id="GO:0009410">
    <property type="term" value="P:response to xenobiotic stimulus"/>
    <property type="evidence" value="ECO:0000270"/>
    <property type="project" value="RGD"/>
</dbReference>
<dbReference type="GO" id="GO:0006641">
    <property type="term" value="P:triglyceride metabolic process"/>
    <property type="evidence" value="ECO:0000315"/>
    <property type="project" value="RGD"/>
</dbReference>
<dbReference type="FunFam" id="3.30.559.70:FF:000001">
    <property type="entry name" value="Carnitine O-palmitoyltransferase 1, liver isoform"/>
    <property type="match status" value="1"/>
</dbReference>
<dbReference type="FunFam" id="3.30.559.10:FF:000042">
    <property type="entry name" value="Carnitine Palmitoyl Transferase"/>
    <property type="match status" value="1"/>
</dbReference>
<dbReference type="Gene3D" id="6.10.250.1760">
    <property type="match status" value="1"/>
</dbReference>
<dbReference type="Gene3D" id="3.30.559.10">
    <property type="entry name" value="Chloramphenicol acetyltransferase-like domain"/>
    <property type="match status" value="1"/>
</dbReference>
<dbReference type="Gene3D" id="3.30.559.70">
    <property type="entry name" value="Choline/Carnitine o-acyltransferase, domain 2"/>
    <property type="match status" value="1"/>
</dbReference>
<dbReference type="InterPro" id="IPR000542">
    <property type="entry name" value="Carn_acyl_trans"/>
</dbReference>
<dbReference type="InterPro" id="IPR023213">
    <property type="entry name" value="CAT-like_dom_sf"/>
</dbReference>
<dbReference type="InterPro" id="IPR039551">
    <property type="entry name" value="Cho/carn_acyl_trans"/>
</dbReference>
<dbReference type="InterPro" id="IPR042231">
    <property type="entry name" value="Cho/carn_acyl_trans_2"/>
</dbReference>
<dbReference type="InterPro" id="IPR032476">
    <property type="entry name" value="CPT_N"/>
</dbReference>
<dbReference type="PANTHER" id="PTHR22589">
    <property type="entry name" value="CARNITINE O-ACYLTRANSFERASE"/>
    <property type="match status" value="1"/>
</dbReference>
<dbReference type="PANTHER" id="PTHR22589:SF74">
    <property type="entry name" value="CARNITINE O-PALMITOYLTRANSFERASE 1, LIVER ISOFORM"/>
    <property type="match status" value="1"/>
</dbReference>
<dbReference type="Pfam" id="PF00755">
    <property type="entry name" value="Carn_acyltransf"/>
    <property type="match status" value="1"/>
</dbReference>
<dbReference type="Pfam" id="PF16484">
    <property type="entry name" value="CPT_N"/>
    <property type="match status" value="1"/>
</dbReference>
<dbReference type="SUPFAM" id="SSF52777">
    <property type="entry name" value="CoA-dependent acyltransferases"/>
    <property type="match status" value="2"/>
</dbReference>
<dbReference type="PROSITE" id="PS00439">
    <property type="entry name" value="ACYLTRANSF_C_1"/>
    <property type="match status" value="1"/>
</dbReference>
<dbReference type="PROSITE" id="PS00440">
    <property type="entry name" value="ACYLTRANSF_C_2"/>
    <property type="match status" value="1"/>
</dbReference>
<comment type="function">
    <text evidence="2 7 10 13 14">Catalyzes the transfer of the acyl group of long-chain fatty acid-CoA conjugates onto carnitine, an essential step for the mitochondrial uptake of long-chain fatty acids and their subsequent beta-oxidation in the mitochondrion (PubMed:16908527, PubMed:21990363, PubMed:24222496). Also possesses a lysine succinyltransferase activity that can regulate enzymatic activity of substrate proteins such as ENO1 and metabolism independent of its classical carnitine O-palmitoyltransferase activity (By similarity). Plays an important role in hepatic triglyceride metabolism (PubMed:18349115). Also plays a role in inducible regulatory T-cell (iTreg) differentiation once activated by butyryl-CoA that antagonizes malonyl-CoA-mediated CPT1A repression (By similarity). Sustains the IFN-I response by recruiting ZDHCC4 to palmitoylate MAVS at the mitochondria leading to MAVS stabilization and activation (By similarity).</text>
</comment>
<comment type="catalytic activity">
    <reaction evidence="7 10 13 14">
        <text>(R)-carnitine + hexadecanoyl-CoA = O-hexadecanoyl-(R)-carnitine + CoA</text>
        <dbReference type="Rhea" id="RHEA:12661"/>
        <dbReference type="ChEBI" id="CHEBI:16347"/>
        <dbReference type="ChEBI" id="CHEBI:17490"/>
        <dbReference type="ChEBI" id="CHEBI:57287"/>
        <dbReference type="ChEBI" id="CHEBI:57379"/>
        <dbReference type="EC" id="2.3.1.21"/>
    </reaction>
    <physiologicalReaction direction="left-to-right" evidence="17">
        <dbReference type="Rhea" id="RHEA:12662"/>
    </physiologicalReaction>
</comment>
<comment type="catalytic activity">
    <reaction evidence="2">
        <text>succinyl-CoA + L-lysyl-[protein] = N(6)-succinyl-L-lysyl-[protein] + CoA + H(+)</text>
        <dbReference type="Rhea" id="RHEA:16261"/>
        <dbReference type="Rhea" id="RHEA-COMP:9752"/>
        <dbReference type="Rhea" id="RHEA-COMP:11877"/>
        <dbReference type="ChEBI" id="CHEBI:15378"/>
        <dbReference type="ChEBI" id="CHEBI:29969"/>
        <dbReference type="ChEBI" id="CHEBI:57287"/>
        <dbReference type="ChEBI" id="CHEBI:57292"/>
        <dbReference type="ChEBI" id="CHEBI:87830"/>
    </reaction>
</comment>
<comment type="activity regulation">
    <text evidence="7 13">Inhibited by malonyl-CoA.</text>
</comment>
<comment type="biophysicochemical properties">
    <kinetics>
        <KM evidence="7">184.2 uM for carnitine</KM>
        <KM evidence="9">127 mM for carnitine</KM>
        <KM evidence="9">4.9 mM for palmitoyl-CoA</KM>
        <KM evidence="7">46.5 uM for palmitoyl-CoA</KM>
        <Vmax evidence="9">6.6 nmol/min/mg enzyme (towards carnitine)</Vmax>
        <Vmax evidence="9">6.3 nmol/min/mg enzyme (towards palmitoyl-CoA)</Vmax>
    </kinetics>
</comment>
<comment type="pathway">
    <text>Lipid metabolism; fatty acid beta-oxidation.</text>
</comment>
<comment type="subunit">
    <text evidence="2 11 12">Homohexamer and homotrimer (PubMed:19136561). Identified in a complex that contains at least CPT1A, ACSL1 and VDAC1 (PubMed:21622568). Also identified in complexes with ACSL1 and VDAC2 and VDAC3. Interacts with ZDHHC4 (By similarity).</text>
</comment>
<comment type="subcellular location">
    <subcellularLocation>
        <location evidence="7 9 11 12">Mitochondrion outer membrane</location>
        <topology evidence="3">Multi-pass membrane protein</topology>
    </subcellularLocation>
</comment>
<comment type="tissue specificity">
    <text evidence="15">Liver and kidney.</text>
</comment>
<comment type="domain">
    <text evidence="13">A conformation change in the N-terminal region spanning the first 42 residues plays an important role in the regulation of enzyme activity by malonyl-CoA.</text>
</comment>
<comment type="similarity">
    <text evidence="16">Belongs to the carnitine/choline acetyltransferase family.</text>
</comment>
<keyword id="KW-0007">Acetylation</keyword>
<keyword id="KW-0012">Acyltransferase</keyword>
<keyword id="KW-0903">Direct protein sequencing</keyword>
<keyword id="KW-0276">Fatty acid metabolism</keyword>
<keyword id="KW-0443">Lipid metabolism</keyword>
<keyword id="KW-0472">Membrane</keyword>
<keyword id="KW-0496">Mitochondrion</keyword>
<keyword id="KW-1000">Mitochondrion outer membrane</keyword>
<keyword id="KW-0944">Nitration</keyword>
<keyword id="KW-0597">Phosphoprotein</keyword>
<keyword id="KW-1185">Reference proteome</keyword>
<keyword id="KW-0808">Transferase</keyword>
<keyword id="KW-0812">Transmembrane</keyword>
<keyword id="KW-1133">Transmembrane helix</keyword>
<keyword id="KW-0813">Transport</keyword>
<gene>
    <name type="primary">Cpt1a</name>
    <name type="synonym">Cpt-1</name>
    <name type="synonym">Cpt1</name>
</gene>
<feature type="initiator methionine" description="Removed" evidence="8">
    <location>
        <position position="1"/>
    </location>
</feature>
<feature type="chain" id="PRO_0000210161" description="Carnitine O-palmitoyltransferase 1, liver isoform">
    <location>
        <begin position="2"/>
        <end position="773"/>
    </location>
</feature>
<feature type="topological domain" description="Cytoplasmic" evidence="3">
    <location>
        <begin position="2"/>
        <end position="47"/>
    </location>
</feature>
<feature type="transmembrane region" description="Helical" evidence="3">
    <location>
        <begin position="48"/>
        <end position="73"/>
    </location>
</feature>
<feature type="topological domain" description="Mitochondrial intermembrane" evidence="3">
    <location>
        <begin position="74"/>
        <end position="102"/>
    </location>
</feature>
<feature type="transmembrane region" description="Helical" evidence="3">
    <location>
        <begin position="103"/>
        <end position="122"/>
    </location>
</feature>
<feature type="topological domain" description="Cytoplasmic" evidence="3">
    <location>
        <begin position="123"/>
        <end position="773"/>
    </location>
</feature>
<feature type="active site" description="Proton acceptor" evidence="1">
    <location>
        <position position="473"/>
    </location>
</feature>
<feature type="binding site" evidence="1">
    <location>
        <begin position="555"/>
        <end position="567"/>
    </location>
    <ligand>
        <name>CoA</name>
        <dbReference type="ChEBI" id="CHEBI:57287"/>
    </ligand>
</feature>
<feature type="binding site" evidence="1">
    <location>
        <position position="589"/>
    </location>
    <ligand>
        <name>(R)-carnitine</name>
        <dbReference type="ChEBI" id="CHEBI:16347"/>
    </ligand>
</feature>
<feature type="binding site" evidence="1">
    <location>
        <position position="602"/>
    </location>
    <ligand>
        <name>(R)-carnitine</name>
        <dbReference type="ChEBI" id="CHEBI:16347"/>
    </ligand>
</feature>
<feature type="modified residue" description="N-acetylalanine" evidence="8">
    <location>
        <position position="2"/>
    </location>
</feature>
<feature type="modified residue" description="3'-nitrotyrosine" evidence="8">
    <location>
        <position position="282"/>
    </location>
</feature>
<feature type="modified residue" description="Phosphothreonine" evidence="8">
    <location>
        <position position="588"/>
    </location>
</feature>
<feature type="modified residue" description="3'-nitrotyrosine" evidence="8">
    <location>
        <position position="589"/>
    </location>
</feature>
<feature type="modified residue" description="Phosphothreonine" evidence="8">
    <location>
        <position position="604"/>
    </location>
</feature>
<feature type="modified residue" description="Phosphoserine" evidence="8">
    <location>
        <position position="741"/>
    </location>
</feature>
<feature type="modified residue" description="Phosphoserine" evidence="8">
    <location>
        <position position="747"/>
    </location>
</feature>
<feature type="mutagenesis site" description="Decreases susceptibility to inhibition by malonyl-CoA." evidence="13">
    <original>E</original>
    <variation>R</variation>
    <location>
        <position position="3"/>
    </location>
</feature>
<feature type="mutagenesis site" description="Increases susceptibility to inhibition by malonyl-CoA." evidence="13">
    <original>A</original>
    <variation>G</variation>
    <location>
        <position position="9"/>
    </location>
</feature>
<feature type="mutagenesis site" description="Increases susceptibility to inhibition by malonyl-CoA." evidence="13">
    <original>G</original>
    <variation>A</variation>
    <location>
        <position position="18"/>
    </location>
</feature>
<feature type="mutagenesis site" description="Reduces activity by 86%. No effect on inhibition by malonyl-coenzyme A." evidence="4">
    <original>A</original>
    <variation>D</variation>
    <location>
        <position position="381"/>
    </location>
</feature>
<feature type="mutagenesis site" description="Loss of activity." evidence="4">
    <original>H</original>
    <variation>A</variation>
    <location>
        <position position="473"/>
    </location>
</feature>
<feature type="mutagenesis site" description="Reduces activity by 98%." evidence="6">
    <original>D</original>
    <variation>A</variation>
    <location>
        <position position="477"/>
    </location>
</feature>
<feature type="mutagenesis site" description="Reduces activity by 50%." evidence="6">
    <original>K</original>
    <variation>A</variation>
    <location>
        <position position="560"/>
    </location>
</feature>
<feature type="mutagenesis site" description="Reduces activity by 97%.">
    <original>D</original>
    <variation>A</variation>
    <location>
        <position position="567"/>
    </location>
</feature>
<feature type="mutagenesis site" description="Reduces activity by over 60%." evidence="6">
    <original>E</original>
    <variation>D</variation>
    <location>
        <position position="590"/>
    </location>
</feature>
<feature type="mutagenesis site" description="Almost abolishes inhibition by malonyl-coenzyme A." evidence="5">
    <original>M</original>
    <variation>A</variation>
    <variation>E</variation>
    <variation>S</variation>
    <location>
        <position position="593"/>
    </location>
</feature>
<feature type="mutagenesis site" description="Slightly lowers inhibition by malonyl-coenzyme A." evidence="5">
    <original>C</original>
    <variation>A</variation>
    <location>
        <position position="608"/>
    </location>
</feature>
<feature type="mutagenesis site" description="Reduces activity by 50%." evidence="6">
    <original>S</original>
    <variation>A</variation>
    <location>
        <position position="685"/>
    </location>
</feature>
<feature type="mutagenesis site" description="Loss of activity." evidence="6">
    <original>T</original>
    <variation>A</variation>
    <location>
        <position position="686"/>
    </location>
</feature>
<feature type="mutagenesis site" description="Loss of activity." evidence="6">
    <original>S</original>
    <variation>A</variation>
    <location>
        <position position="687"/>
    </location>
</feature>
<feature type="sequence conflict" description="In Ref. 5; AA sequence." evidence="16" ref="5">
    <original>H</original>
    <variation>D</variation>
    <location>
        <position position="266"/>
    </location>
</feature>
<feature type="sequence conflict" description="In Ref. 5; AA sequence." evidence="16" ref="5">
    <original>QP</original>
    <variation>NG</variation>
    <location>
        <begin position="374"/>
        <end position="375"/>
    </location>
</feature>
<feature type="sequence conflict" description="In Ref. 1; AAA40876." evidence="16" ref="1">
    <original>V</original>
    <variation>I</variation>
    <location>
        <position position="480"/>
    </location>
</feature>
<feature type="sequence conflict" description="In Ref. 5; AA sequence." evidence="16" ref="5">
    <original>D</original>
    <variation>Y</variation>
    <location>
        <position position="531"/>
    </location>
</feature>
<feature type="sequence conflict" description="In Ref. 5; AA sequence." evidence="16" ref="5">
    <original>C</original>
    <variation>R</variation>
    <location>
        <position position="708"/>
    </location>
</feature>
<protein>
    <recommendedName>
        <fullName>Carnitine O-palmitoyltransferase 1, liver isoform</fullName>
        <shortName>CPT1-L</shortName>
        <ecNumber evidence="7 10 13">2.3.1.21</ecNumber>
    </recommendedName>
    <alternativeName>
        <fullName>Carnitine O-palmitoyltransferase I, liver isoform</fullName>
        <shortName>CPT I</shortName>
        <shortName>CPTI-L</shortName>
    </alternativeName>
    <alternativeName>
        <fullName>Carnitine palmitoyltransferase 1A</fullName>
    </alternativeName>
    <alternativeName>
        <fullName>Succinyltransferase CPT1A</fullName>
        <ecNumber evidence="2">2.3.1.-</ecNumber>
    </alternativeName>
</protein>
<proteinExistence type="evidence at protein level"/>
<accession>P32198</accession>
<accession>P97780</accession>
<accession>Q6IMZ4</accession>